<reference key="1">
    <citation type="submission" date="2002-12" db="EMBL/GenBank/DDBJ databases">
        <authorList>
            <consortium name="NIH - Xenopus Gene Collection (XGC) project"/>
        </authorList>
    </citation>
    <scope>NUCLEOTIDE SEQUENCE [LARGE SCALE MRNA]</scope>
    <source>
        <tissue>Embryo</tissue>
    </source>
</reference>
<name>ACTG_XENTR</name>
<comment type="function">
    <text evidence="2">Actins are highly conserved proteins that are involved in various types of cell motility and are ubiquitously expressed in all eukaryotic cells.</text>
</comment>
<comment type="catalytic activity">
    <reaction evidence="3">
        <text>ATP + H2O = ADP + phosphate + H(+)</text>
        <dbReference type="Rhea" id="RHEA:13065"/>
        <dbReference type="ChEBI" id="CHEBI:15377"/>
        <dbReference type="ChEBI" id="CHEBI:15378"/>
        <dbReference type="ChEBI" id="CHEBI:30616"/>
        <dbReference type="ChEBI" id="CHEBI:43474"/>
        <dbReference type="ChEBI" id="CHEBI:456216"/>
    </reaction>
</comment>
<comment type="subunit">
    <text>Polymerization of globular actin (G-actin) leads to a structural filament (F-actin) in the form of a two-stranded helix. Each actin can bind to 4 others.</text>
</comment>
<comment type="subcellular location">
    <subcellularLocation>
        <location evidence="2">Cytoplasm</location>
        <location evidence="2">Cytoskeleton</location>
    </subcellularLocation>
</comment>
<comment type="PTM">
    <molecule>Actin, cytoplasmic 2</molecule>
    <text evidence="2">N-terminal cleavage of acetylated methionine of immature cytoplasmic actin by ACTMAP.</text>
</comment>
<comment type="PTM">
    <text evidence="1">Oxidation of Met-44 and Met-47 by MICALs (mical1, mical2 or mical3) to form methionine sulfoxide promotes actin filament depolymerization. Mical1 and mical2 produce the (R)-S-oxide form. The (R)-S-oxide form is reverted by msrb1 and msrb2, which promote actin repolymerization.</text>
</comment>
<comment type="PTM">
    <text evidence="2">Methylated at His-73 by SETD3.</text>
</comment>
<comment type="miscellaneous">
    <text>In vertebrates 3 main groups of actin isoforms, alpha, beta and gamma have been identified. The alpha actins are found in muscle tissues and are a major constituent of the contractile apparatus. The beta and gamma actins coexist in most cell types as components of the cytoskeleton and as mediators of internal cell motility.</text>
</comment>
<comment type="similarity">
    <text evidence="4">Belongs to the actin family.</text>
</comment>
<sequence>MDEEIAALVVDNGSGMCKAGFAGDDAPRAVFPSIVGRPRHQGVMVGMGQKDSYVGDEAQSKRGILTLKYPIEHGIVTNWDDMEKIWHHTFYNELRVAPEEHPVLLTEAPLNPKANREKMTQIMFETFNTPAMYVAIQAVLSLYASGRTTGIVMDSGDGVTHTVPIYEGYALPHAILRLDLAGRDLTDYLMKILTERGYSFTTTAEREIVRDIKEKLCYVALDFEQEMATAASSSSLEKSYELPDGQVITIGNERFRCPEALFQPSFLGMESCGIHETTFNSIMKCDVDIRKDLYANTVLSGGTTMYPGIADRMQKEITALAPSTMKIKIIAPPERKYSVWIGGSILASLSTFQQMWISKQEYDESGPSIVHRKCF</sequence>
<feature type="chain" id="PRO_0000367109" description="Actin, cytoplasmic 2">
    <location>
        <begin position="1"/>
        <end position="375"/>
    </location>
</feature>
<feature type="initiator methionine" description="Removed; alternate" evidence="2">
    <location>
        <position position="1"/>
    </location>
</feature>
<feature type="chain" id="PRO_0000280377" description="Actin, cytoplasmic 2, N-terminally processed">
    <location>
        <begin position="2"/>
        <end position="375"/>
    </location>
</feature>
<feature type="modified residue" description="N-acetylmethionine; in Actin, cytoplasmic 2; alternate" evidence="2">
    <location>
        <position position="1"/>
    </location>
</feature>
<feature type="modified residue" description="N-acetylaspartate; in Actin, cytoplasmic 2, N-terminally processed" evidence="2">
    <location>
        <position position="2"/>
    </location>
</feature>
<feature type="modified residue" description="Methionine (R)-sulfoxide" evidence="1">
    <location>
        <position position="44"/>
    </location>
</feature>
<feature type="modified residue" description="Methionine (R)-sulfoxide" evidence="1">
    <location>
        <position position="47"/>
    </location>
</feature>
<feature type="modified residue" description="Tele-methylhistidine" evidence="1">
    <location>
        <position position="73"/>
    </location>
</feature>
<proteinExistence type="evidence at transcript level"/>
<gene>
    <name type="primary">actg1</name>
</gene>
<evidence type="ECO:0000250" key="1">
    <source>
        <dbReference type="UniProtKB" id="P63260"/>
    </source>
</evidence>
<evidence type="ECO:0000250" key="2">
    <source>
        <dbReference type="UniProtKB" id="P63261"/>
    </source>
</evidence>
<evidence type="ECO:0000250" key="3">
    <source>
        <dbReference type="UniProtKB" id="P68137"/>
    </source>
</evidence>
<evidence type="ECO:0000305" key="4"/>
<protein>
    <recommendedName>
        <fullName>Actin, cytoplasmic 2</fullName>
        <ecNumber evidence="3">3.6.4.-</ecNumber>
    </recommendedName>
    <alternativeName>
        <fullName>Actin, cytoplasmic, type 5</fullName>
    </alternativeName>
    <alternativeName>
        <fullName>Gamma-actin</fullName>
    </alternativeName>
    <component>
        <recommendedName>
            <fullName>Actin, cytoplasmic 2, N-terminally processed</fullName>
        </recommendedName>
    </component>
</protein>
<accession>Q6P378</accession>
<dbReference type="EC" id="3.6.4.-" evidence="3"/>
<dbReference type="EMBL" id="BC064155">
    <property type="protein sequence ID" value="AAH64155.1"/>
    <property type="molecule type" value="mRNA"/>
</dbReference>
<dbReference type="RefSeq" id="NP_989332.1">
    <property type="nucleotide sequence ID" value="NM_204001.1"/>
</dbReference>
<dbReference type="SMR" id="Q6P378"/>
<dbReference type="FunCoup" id="Q6P378">
    <property type="interactions" value="2687"/>
</dbReference>
<dbReference type="STRING" id="8364.ENSXETP00000017479"/>
<dbReference type="PaxDb" id="8364-ENSXETP00000057558"/>
<dbReference type="GeneID" id="394957"/>
<dbReference type="KEGG" id="xtr:394957"/>
<dbReference type="AGR" id="Xenbase:XB-GENE-491618"/>
<dbReference type="CTD" id="71"/>
<dbReference type="Xenbase" id="XB-GENE-491618">
    <property type="gene designation" value="actg1"/>
</dbReference>
<dbReference type="eggNOG" id="KOG0676">
    <property type="taxonomic scope" value="Eukaryota"/>
</dbReference>
<dbReference type="HOGENOM" id="CLU_027965_0_2_1"/>
<dbReference type="InParanoid" id="Q6P378"/>
<dbReference type="OMA" id="PNIMVGM"/>
<dbReference type="OrthoDB" id="5132116at2759"/>
<dbReference type="PhylomeDB" id="Q6P378"/>
<dbReference type="Reactome" id="R-XTR-196025">
    <property type="pathway name" value="Formation of annular gap junctions"/>
</dbReference>
<dbReference type="Reactome" id="R-XTR-2029482">
    <property type="pathway name" value="Regulation of actin dynamics for phagocytic cup formation"/>
</dbReference>
<dbReference type="Reactome" id="R-XTR-437239">
    <property type="pathway name" value="Recycling pathway of L1"/>
</dbReference>
<dbReference type="Reactome" id="R-XTR-446353">
    <property type="pathway name" value="Cell-extracellular matrix interactions"/>
</dbReference>
<dbReference type="Reactome" id="R-XTR-5626467">
    <property type="pathway name" value="RHO GTPases activate IQGAPs"/>
</dbReference>
<dbReference type="Reactome" id="R-XTR-5663213">
    <property type="pathway name" value="RHO GTPases Activate WASPs and WAVEs"/>
</dbReference>
<dbReference type="Reactome" id="R-XTR-5663220">
    <property type="pathway name" value="RHO GTPases Activate Formins"/>
</dbReference>
<dbReference type="Reactome" id="R-XTR-5689603">
    <property type="pathway name" value="UCH proteinases"/>
</dbReference>
<dbReference type="Reactome" id="R-XTR-5696394">
    <property type="pathway name" value="DNA Damage Recognition in GG-NER"/>
</dbReference>
<dbReference type="Reactome" id="R-XTR-9035034">
    <property type="pathway name" value="RHOF GTPase cycle"/>
</dbReference>
<dbReference type="Proteomes" id="UP000008143">
    <property type="component" value="Chromosome 10"/>
</dbReference>
<dbReference type="Bgee" id="ENSXETG00000027641">
    <property type="expression patterns" value="Expressed in neurula embryo and 37 other cell types or tissues"/>
</dbReference>
<dbReference type="GO" id="GO:0005856">
    <property type="term" value="C:cytoskeleton"/>
    <property type="evidence" value="ECO:0000250"/>
    <property type="project" value="AgBase"/>
</dbReference>
<dbReference type="GO" id="GO:0097433">
    <property type="term" value="C:dense body"/>
    <property type="evidence" value="ECO:0000250"/>
    <property type="project" value="AgBase"/>
</dbReference>
<dbReference type="GO" id="GO:0005925">
    <property type="term" value="C:focal adhesion"/>
    <property type="evidence" value="ECO:0000250"/>
    <property type="project" value="AgBase"/>
</dbReference>
<dbReference type="GO" id="GO:0005886">
    <property type="term" value="C:plasma membrane"/>
    <property type="evidence" value="ECO:0000250"/>
    <property type="project" value="AgBase"/>
</dbReference>
<dbReference type="GO" id="GO:0005524">
    <property type="term" value="F:ATP binding"/>
    <property type="evidence" value="ECO:0007669"/>
    <property type="project" value="UniProtKB-KW"/>
</dbReference>
<dbReference type="GO" id="GO:0016787">
    <property type="term" value="F:hydrolase activity"/>
    <property type="evidence" value="ECO:0007669"/>
    <property type="project" value="UniProtKB-KW"/>
</dbReference>
<dbReference type="CDD" id="cd10224">
    <property type="entry name" value="ASKHA_NBD_actin"/>
    <property type="match status" value="1"/>
</dbReference>
<dbReference type="FunFam" id="2.30.36.70:FF:000001">
    <property type="entry name" value="Actin, alpha skeletal muscle"/>
    <property type="match status" value="1"/>
</dbReference>
<dbReference type="FunFam" id="3.30.420.40:FF:000131">
    <property type="entry name" value="Actin, alpha skeletal muscle"/>
    <property type="match status" value="1"/>
</dbReference>
<dbReference type="FunFam" id="3.30.420.40:FF:000291">
    <property type="entry name" value="Actin, alpha skeletal muscle"/>
    <property type="match status" value="1"/>
</dbReference>
<dbReference type="FunFam" id="3.90.640.10:FF:000047">
    <property type="entry name" value="Actin, alpha skeletal muscle"/>
    <property type="match status" value="1"/>
</dbReference>
<dbReference type="FunFam" id="3.30.420.40:FF:000058">
    <property type="entry name" value="Putative actin-related protein 5"/>
    <property type="match status" value="1"/>
</dbReference>
<dbReference type="Gene3D" id="3.30.420.40">
    <property type="match status" value="2"/>
</dbReference>
<dbReference type="Gene3D" id="3.90.640.10">
    <property type="entry name" value="Actin, Chain A, domain 4"/>
    <property type="match status" value="1"/>
</dbReference>
<dbReference type="InterPro" id="IPR004000">
    <property type="entry name" value="Actin"/>
</dbReference>
<dbReference type="InterPro" id="IPR020902">
    <property type="entry name" value="Actin/actin-like_CS"/>
</dbReference>
<dbReference type="InterPro" id="IPR004001">
    <property type="entry name" value="Actin_CS"/>
</dbReference>
<dbReference type="InterPro" id="IPR043129">
    <property type="entry name" value="ATPase_NBD"/>
</dbReference>
<dbReference type="PANTHER" id="PTHR11937">
    <property type="entry name" value="ACTIN"/>
    <property type="match status" value="1"/>
</dbReference>
<dbReference type="Pfam" id="PF00022">
    <property type="entry name" value="Actin"/>
    <property type="match status" value="1"/>
</dbReference>
<dbReference type="PRINTS" id="PR00190">
    <property type="entry name" value="ACTIN"/>
</dbReference>
<dbReference type="SMART" id="SM00268">
    <property type="entry name" value="ACTIN"/>
    <property type="match status" value="1"/>
</dbReference>
<dbReference type="SUPFAM" id="SSF53067">
    <property type="entry name" value="Actin-like ATPase domain"/>
    <property type="match status" value="2"/>
</dbReference>
<dbReference type="PROSITE" id="PS00406">
    <property type="entry name" value="ACTINS_1"/>
    <property type="match status" value="1"/>
</dbReference>
<dbReference type="PROSITE" id="PS00432">
    <property type="entry name" value="ACTINS_2"/>
    <property type="match status" value="1"/>
</dbReference>
<dbReference type="PROSITE" id="PS01132">
    <property type="entry name" value="ACTINS_ACT_LIKE"/>
    <property type="match status" value="1"/>
</dbReference>
<organism>
    <name type="scientific">Xenopus tropicalis</name>
    <name type="common">Western clawed frog</name>
    <name type="synonym">Silurana tropicalis</name>
    <dbReference type="NCBI Taxonomy" id="8364"/>
    <lineage>
        <taxon>Eukaryota</taxon>
        <taxon>Metazoa</taxon>
        <taxon>Chordata</taxon>
        <taxon>Craniata</taxon>
        <taxon>Vertebrata</taxon>
        <taxon>Euteleostomi</taxon>
        <taxon>Amphibia</taxon>
        <taxon>Batrachia</taxon>
        <taxon>Anura</taxon>
        <taxon>Pipoidea</taxon>
        <taxon>Pipidae</taxon>
        <taxon>Xenopodinae</taxon>
        <taxon>Xenopus</taxon>
        <taxon>Silurana</taxon>
    </lineage>
</organism>
<keyword id="KW-0007">Acetylation</keyword>
<keyword id="KW-0067">ATP-binding</keyword>
<keyword id="KW-0963">Cytoplasm</keyword>
<keyword id="KW-0206">Cytoskeleton</keyword>
<keyword id="KW-0378">Hydrolase</keyword>
<keyword id="KW-0488">Methylation</keyword>
<keyword id="KW-0547">Nucleotide-binding</keyword>
<keyword id="KW-0558">Oxidation</keyword>
<keyword id="KW-1185">Reference proteome</keyword>